<reference key="1">
    <citation type="journal article" date="2015" name="Genome Announc.">
        <title>Complete genome sequence of Anaeromyxobacter sp. Fw109-5, an anaerobic, metal-reducing bacterium isolated from a contaminated subsurface environment.</title>
        <authorList>
            <person name="Hwang C."/>
            <person name="Copeland A."/>
            <person name="Lucas S."/>
            <person name="Lapidus A."/>
            <person name="Barry K."/>
            <person name="Glavina Del Rio T."/>
            <person name="Dalin E."/>
            <person name="Tice H."/>
            <person name="Pitluck S."/>
            <person name="Sims D."/>
            <person name="Brettin T."/>
            <person name="Bruce D.C."/>
            <person name="Detter J.C."/>
            <person name="Han C.S."/>
            <person name="Schmutz J."/>
            <person name="Larimer F.W."/>
            <person name="Land M.L."/>
            <person name="Hauser L.J."/>
            <person name="Kyrpides N."/>
            <person name="Lykidis A."/>
            <person name="Richardson P."/>
            <person name="Belieav A."/>
            <person name="Sanford R.A."/>
            <person name="Loeffler F.E."/>
            <person name="Fields M.W."/>
        </authorList>
    </citation>
    <scope>NUCLEOTIDE SEQUENCE [LARGE SCALE GENOMIC DNA]</scope>
    <source>
        <strain>Fw109-5</strain>
    </source>
</reference>
<proteinExistence type="inferred from homology"/>
<name>RL25_ANADF</name>
<protein>
    <recommendedName>
        <fullName evidence="1">Large ribosomal subunit protein bL25</fullName>
    </recommendedName>
    <alternativeName>
        <fullName evidence="3">50S ribosomal protein L25</fullName>
    </alternativeName>
    <alternativeName>
        <fullName evidence="1">General stress protein CTC</fullName>
    </alternativeName>
</protein>
<evidence type="ECO:0000255" key="1">
    <source>
        <dbReference type="HAMAP-Rule" id="MF_01334"/>
    </source>
</evidence>
<evidence type="ECO:0000256" key="2">
    <source>
        <dbReference type="SAM" id="MobiDB-lite"/>
    </source>
</evidence>
<evidence type="ECO:0000305" key="3"/>
<feature type="chain" id="PRO_1000052864" description="Large ribosomal subunit protein bL25">
    <location>
        <begin position="1"/>
        <end position="235"/>
    </location>
</feature>
<feature type="region of interest" description="Disordered" evidence="2">
    <location>
        <begin position="1"/>
        <end position="21"/>
    </location>
</feature>
<feature type="region of interest" description="Disordered" evidence="2">
    <location>
        <begin position="210"/>
        <end position="235"/>
    </location>
</feature>
<feature type="compositionally biased region" description="Low complexity" evidence="2">
    <location>
        <begin position="210"/>
        <end position="222"/>
    </location>
</feature>
<feature type="compositionally biased region" description="Basic and acidic residues" evidence="2">
    <location>
        <begin position="223"/>
        <end position="235"/>
    </location>
</feature>
<keyword id="KW-1185">Reference proteome</keyword>
<keyword id="KW-0687">Ribonucleoprotein</keyword>
<keyword id="KW-0689">Ribosomal protein</keyword>
<keyword id="KW-0694">RNA-binding</keyword>
<keyword id="KW-0699">rRNA-binding</keyword>
<sequence>MADNIINAQRREEKGKGPARRLRQKGLIPAVVYGRKQEPTHLSVDPASLLKAIETPHKFNTLLTLKLDGAEKHVLFKDWAVDPVSRKLEHADFLEVKLDEAVKVAVPVVTSGRSVGQAEGGILSLATHEVVLEALPSKIPVRIEVDVTNLKIGQSIHVSQLTPPEGCKLKYSSDYVIAFVAVPEKEEVAAPVAAAVPGAAPAEGAAAAGAPAAGAAPAAGGEAAKKAPEAKGAKK</sequence>
<dbReference type="EMBL" id="CP000769">
    <property type="protein sequence ID" value="ABS24342.1"/>
    <property type="molecule type" value="Genomic_DNA"/>
</dbReference>
<dbReference type="RefSeq" id="WP_011984448.1">
    <property type="nucleotide sequence ID" value="NC_009675.1"/>
</dbReference>
<dbReference type="SMR" id="A7H6J6"/>
<dbReference type="STRING" id="404589.Anae109_0124"/>
<dbReference type="KEGG" id="afw:Anae109_0124"/>
<dbReference type="eggNOG" id="COG1825">
    <property type="taxonomic scope" value="Bacteria"/>
</dbReference>
<dbReference type="HOGENOM" id="CLU_075939_2_1_7"/>
<dbReference type="OrthoDB" id="9786489at2"/>
<dbReference type="Proteomes" id="UP000006382">
    <property type="component" value="Chromosome"/>
</dbReference>
<dbReference type="GO" id="GO:0022625">
    <property type="term" value="C:cytosolic large ribosomal subunit"/>
    <property type="evidence" value="ECO:0007669"/>
    <property type="project" value="TreeGrafter"/>
</dbReference>
<dbReference type="GO" id="GO:0008097">
    <property type="term" value="F:5S rRNA binding"/>
    <property type="evidence" value="ECO:0007669"/>
    <property type="project" value="InterPro"/>
</dbReference>
<dbReference type="GO" id="GO:0003735">
    <property type="term" value="F:structural constituent of ribosome"/>
    <property type="evidence" value="ECO:0007669"/>
    <property type="project" value="InterPro"/>
</dbReference>
<dbReference type="GO" id="GO:0006412">
    <property type="term" value="P:translation"/>
    <property type="evidence" value="ECO:0007669"/>
    <property type="project" value="UniProtKB-UniRule"/>
</dbReference>
<dbReference type="CDD" id="cd00495">
    <property type="entry name" value="Ribosomal_L25_TL5_CTC"/>
    <property type="match status" value="1"/>
</dbReference>
<dbReference type="Gene3D" id="2.170.120.20">
    <property type="entry name" value="Ribosomal protein L25, beta domain"/>
    <property type="match status" value="1"/>
</dbReference>
<dbReference type="Gene3D" id="2.40.240.10">
    <property type="entry name" value="Ribosomal Protein L25, Chain P"/>
    <property type="match status" value="1"/>
</dbReference>
<dbReference type="HAMAP" id="MF_01334">
    <property type="entry name" value="Ribosomal_bL25_CTC"/>
    <property type="match status" value="1"/>
</dbReference>
<dbReference type="InterPro" id="IPR020056">
    <property type="entry name" value="Rbsml_bL25/Gln-tRNA_synth_N"/>
</dbReference>
<dbReference type="InterPro" id="IPR011035">
    <property type="entry name" value="Ribosomal_bL25/Gln-tRNA_synth"/>
</dbReference>
<dbReference type="InterPro" id="IPR020057">
    <property type="entry name" value="Ribosomal_bL25_b-dom"/>
</dbReference>
<dbReference type="InterPro" id="IPR037121">
    <property type="entry name" value="Ribosomal_bL25_C"/>
</dbReference>
<dbReference type="InterPro" id="IPR001021">
    <property type="entry name" value="Ribosomal_bL25_long"/>
</dbReference>
<dbReference type="InterPro" id="IPR029751">
    <property type="entry name" value="Ribosomal_L25_dom"/>
</dbReference>
<dbReference type="InterPro" id="IPR020930">
    <property type="entry name" value="Ribosomal_uL5_bac-type"/>
</dbReference>
<dbReference type="NCBIfam" id="TIGR00731">
    <property type="entry name" value="bL25_bact_ctc"/>
    <property type="match status" value="1"/>
</dbReference>
<dbReference type="NCBIfam" id="NF004128">
    <property type="entry name" value="PRK05618.1-2"/>
    <property type="match status" value="1"/>
</dbReference>
<dbReference type="NCBIfam" id="NF004137">
    <property type="entry name" value="PRK05618.3-3"/>
    <property type="match status" value="1"/>
</dbReference>
<dbReference type="PANTHER" id="PTHR33284">
    <property type="entry name" value="RIBOSOMAL PROTEIN L25/GLN-TRNA SYNTHETASE, ANTI-CODON-BINDING DOMAIN-CONTAINING PROTEIN"/>
    <property type="match status" value="1"/>
</dbReference>
<dbReference type="PANTHER" id="PTHR33284:SF1">
    <property type="entry name" value="RIBOSOMAL PROTEIN L25_GLN-TRNA SYNTHETASE, ANTI-CODON-BINDING DOMAIN-CONTAINING PROTEIN"/>
    <property type="match status" value="1"/>
</dbReference>
<dbReference type="Pfam" id="PF01386">
    <property type="entry name" value="Ribosomal_L25p"/>
    <property type="match status" value="1"/>
</dbReference>
<dbReference type="Pfam" id="PF14693">
    <property type="entry name" value="Ribosomal_TL5_C"/>
    <property type="match status" value="1"/>
</dbReference>
<dbReference type="SUPFAM" id="SSF50715">
    <property type="entry name" value="Ribosomal protein L25-like"/>
    <property type="match status" value="1"/>
</dbReference>
<gene>
    <name evidence="1" type="primary">rplY</name>
    <name evidence="1" type="synonym">ctc</name>
    <name type="ordered locus">Anae109_0124</name>
</gene>
<comment type="function">
    <text evidence="1">This is one of the proteins that binds to the 5S RNA in the ribosome where it forms part of the central protuberance.</text>
</comment>
<comment type="subunit">
    <text evidence="1">Part of the 50S ribosomal subunit; part of the 5S rRNA/L5/L18/L25 subcomplex. Contacts the 5S rRNA. Binds to the 5S rRNA independently of L5 and L18.</text>
</comment>
<comment type="similarity">
    <text evidence="1">Belongs to the bacterial ribosomal protein bL25 family. CTC subfamily.</text>
</comment>
<accession>A7H6J6</accession>
<organism>
    <name type="scientific">Anaeromyxobacter sp. (strain Fw109-5)</name>
    <dbReference type="NCBI Taxonomy" id="404589"/>
    <lineage>
        <taxon>Bacteria</taxon>
        <taxon>Pseudomonadati</taxon>
        <taxon>Myxococcota</taxon>
        <taxon>Myxococcia</taxon>
        <taxon>Myxococcales</taxon>
        <taxon>Cystobacterineae</taxon>
        <taxon>Anaeromyxobacteraceae</taxon>
        <taxon>Anaeromyxobacter</taxon>
    </lineage>
</organism>